<protein>
    <recommendedName>
        <fullName>Viral inhibitor of caspase-8-induced apoptosis</fullName>
        <shortName>vICA</shortName>
    </recommendedName>
</protein>
<comment type="function">
    <text evidence="1">Plays a role in the inhibition of apoptosis by interacting with the pro-domain of pro-caspase-8/CASP8 and thus preventing its activation.</text>
</comment>
<comment type="subunit">
    <text evidence="1">Interacts with host pro-caspase-8/CASP8; this interaction inhibits CASP8 activation.</text>
</comment>
<comment type="similarity">
    <text evidence="2">Belongs to the herpesviridae US22 family.</text>
</comment>
<proteinExistence type="evidence at protein level"/>
<organism>
    <name type="scientific">Human cytomegalovirus (strain Merlin)</name>
    <name type="common">HHV-5</name>
    <name type="synonym">Human herpesvirus 5</name>
    <dbReference type="NCBI Taxonomy" id="295027"/>
    <lineage>
        <taxon>Viruses</taxon>
        <taxon>Duplodnaviria</taxon>
        <taxon>Heunggongvirae</taxon>
        <taxon>Peploviricota</taxon>
        <taxon>Herviviricetes</taxon>
        <taxon>Herpesvirales</taxon>
        <taxon>Orthoherpesviridae</taxon>
        <taxon>Betaherpesvirinae</taxon>
        <taxon>Cytomegalovirus</taxon>
        <taxon>Cytomegalovirus humanbeta5</taxon>
        <taxon>Human cytomegalovirus</taxon>
    </lineage>
</organism>
<gene>
    <name type="primary">UL36</name>
</gene>
<accession>F5HAY6</accession>
<sequence length="476" mass="54924">MDDLRDTLMAYGCIAIRAGDFNGLNDFLEQECGTRLHVAWPERCFIQLRSRSALGPFVGKMGTVCSQGAYVCCQEYLHPFGFVEGPGFMRYQLIVLIGQRGGIYCYDDLRDCIYELAPTMKDFLRHGFRHCDHFHTMRDYQRPMVQYDDYWNAVMLYRGDVESLSAEVTKRGYASYSIDDPFDECPDTHFAFWTHNTEVMKFKETSFSVVRAGGSIQTMELMIRTVPRITCYHQLLGALGHEVPERKEFLVRQYVLVDTFGVVYGYDPAMDAVYRLAEDVVMFTCVMGKKGHRNHRFSGRREAIVRLEKTPTCQHPKKTPDPMIMFDEDDDDELSLPRNVMTHEEAESRLYDAITENLMHCVKLVTTDSPLATHLWPQELQALCDSPALSLCTDDVEGVRQKLRARTGSLHHFELSYRFHDEDPETYMGFLWDIPSCDRCVRRRRFKVCDVGRRHIIPGAANGMPPLTPPHAYMNN</sequence>
<reference key="1">
    <citation type="journal article" date="2004" name="J. Gen. Virol.">
        <title>Genetic content of wild-type human cytomegalovirus.</title>
        <authorList>
            <person name="Dolan A."/>
            <person name="Cunningham C."/>
            <person name="Hector R.D."/>
            <person name="Hassan-Walker A.F."/>
            <person name="Lee L."/>
            <person name="Addison C."/>
            <person name="Dargan D.J."/>
            <person name="McGeoch D.J."/>
            <person name="Gatherer D."/>
            <person name="Emery V.C."/>
            <person name="Griffiths P.D."/>
            <person name="Sinzger C."/>
            <person name="McSharry B.P."/>
            <person name="Wilkinson G.W.G."/>
            <person name="Davison A.J."/>
        </authorList>
    </citation>
    <scope>NUCLEOTIDE SEQUENCE [LARGE SCALE GENOMIC DNA]</scope>
</reference>
<reference key="2">
    <citation type="journal article" date="2001" name="Proc. Natl. Acad. Sci. U.S.A.">
        <title>A cytomegalovirus-encoded inhibitor of apoptosis that suppresses caspase-8 activation.</title>
        <authorList>
            <person name="Skaletskaya A."/>
            <person name="Bartle L.M."/>
            <person name="Chittenden T."/>
            <person name="McCormick A.L."/>
            <person name="Mocarski E.S."/>
            <person name="Goldmacher V.S."/>
        </authorList>
    </citation>
    <scope>FUNCTION</scope>
    <scope>INTERACTION WITH HOST CASP8</scope>
    <scope>MUTAGENESIS OF CYS-131</scope>
    <source>
        <strain>Towne</strain>
    </source>
</reference>
<evidence type="ECO:0000269" key="1">
    <source>
    </source>
</evidence>
<evidence type="ECO:0000305" key="2"/>
<name>VICA_HCMVM</name>
<feature type="chain" id="PRO_0000418299" description="Viral inhibitor of caspase-8-induced apoptosis">
    <location>
        <begin position="1"/>
        <end position="476"/>
    </location>
</feature>
<feature type="mutagenesis site" description="Complete loss of interaction with Pro-caspase 8." evidence="1">
    <original>C</original>
    <variation>R</variation>
    <location>
        <position position="131"/>
    </location>
</feature>
<dbReference type="EMBL" id="AY446894">
    <property type="protein sequence ID" value="AAR31601.1"/>
    <property type="molecule type" value="Genomic_DNA"/>
</dbReference>
<dbReference type="RefSeq" id="YP_081495.1">
    <property type="nucleotide sequence ID" value="NC_006273.2"/>
</dbReference>
<dbReference type="GeneID" id="3077442"/>
<dbReference type="KEGG" id="vg:3077442"/>
<dbReference type="Reactome" id="R-HSA-9609690">
    <property type="pathway name" value="HCMV Early Events"/>
</dbReference>
<dbReference type="Reactome" id="R-HSA-9610379">
    <property type="pathway name" value="HCMV Late Events"/>
</dbReference>
<dbReference type="Proteomes" id="UP000000938">
    <property type="component" value="Segment"/>
</dbReference>
<dbReference type="GO" id="GO:0019033">
    <property type="term" value="C:viral tegument"/>
    <property type="evidence" value="ECO:0000304"/>
    <property type="project" value="Reactome"/>
</dbReference>
<dbReference type="GO" id="GO:0033668">
    <property type="term" value="P:symbiont-mediated suppression of host apoptosis"/>
    <property type="evidence" value="ECO:0007669"/>
    <property type="project" value="UniProtKB-KW"/>
</dbReference>
<dbReference type="InterPro" id="IPR003360">
    <property type="entry name" value="US22-like"/>
</dbReference>
<dbReference type="Pfam" id="PF02393">
    <property type="entry name" value="US22"/>
    <property type="match status" value="2"/>
</dbReference>
<keyword id="KW-0945">Host-virus interaction</keyword>
<keyword id="KW-1085">Inhibition of host caspases by virus</keyword>
<keyword id="KW-1119">Modulation of host cell apoptosis by virus</keyword>
<keyword id="KW-1185">Reference proteome</keyword>
<organismHost>
    <name type="scientific">Homo sapiens</name>
    <name type="common">Human</name>
    <dbReference type="NCBI Taxonomy" id="9606"/>
</organismHost>